<reference key="1">
    <citation type="journal article" date="2005" name="Nucleic Acids Res.">
        <title>Genome dynamics and diversity of Shigella species, the etiologic agents of bacillary dysentery.</title>
        <authorList>
            <person name="Yang F."/>
            <person name="Yang J."/>
            <person name="Zhang X."/>
            <person name="Chen L."/>
            <person name="Jiang Y."/>
            <person name="Yan Y."/>
            <person name="Tang X."/>
            <person name="Wang J."/>
            <person name="Xiong Z."/>
            <person name="Dong J."/>
            <person name="Xue Y."/>
            <person name="Zhu Y."/>
            <person name="Xu X."/>
            <person name="Sun L."/>
            <person name="Chen S."/>
            <person name="Nie H."/>
            <person name="Peng J."/>
            <person name="Xu J."/>
            <person name="Wang Y."/>
            <person name="Yuan Z."/>
            <person name="Wen Y."/>
            <person name="Yao Z."/>
            <person name="Shen Y."/>
            <person name="Qiang B."/>
            <person name="Hou Y."/>
            <person name="Yu J."/>
            <person name="Jin Q."/>
        </authorList>
    </citation>
    <scope>NUCLEOTIDE SEQUENCE [LARGE SCALE GENOMIC DNA]</scope>
    <source>
        <strain>Ss046</strain>
    </source>
</reference>
<name>RL9_SHISS</name>
<organism>
    <name type="scientific">Shigella sonnei (strain Ss046)</name>
    <dbReference type="NCBI Taxonomy" id="300269"/>
    <lineage>
        <taxon>Bacteria</taxon>
        <taxon>Pseudomonadati</taxon>
        <taxon>Pseudomonadota</taxon>
        <taxon>Gammaproteobacteria</taxon>
        <taxon>Enterobacterales</taxon>
        <taxon>Enterobacteriaceae</taxon>
        <taxon>Shigella</taxon>
    </lineage>
</organism>
<evidence type="ECO:0000255" key="1">
    <source>
        <dbReference type="HAMAP-Rule" id="MF_00503"/>
    </source>
</evidence>
<evidence type="ECO:0000305" key="2"/>
<comment type="function">
    <text evidence="1">Binds to the 23S rRNA.</text>
</comment>
<comment type="similarity">
    <text evidence="1">Belongs to the bacterial ribosomal protein bL9 family.</text>
</comment>
<protein>
    <recommendedName>
        <fullName evidence="1">Large ribosomal subunit protein bL9</fullName>
    </recommendedName>
    <alternativeName>
        <fullName evidence="2">50S ribosomal protein L9</fullName>
    </alternativeName>
</protein>
<keyword id="KW-0007">Acetylation</keyword>
<keyword id="KW-1185">Reference proteome</keyword>
<keyword id="KW-0687">Ribonucleoprotein</keyword>
<keyword id="KW-0689">Ribosomal protein</keyword>
<keyword id="KW-0694">RNA-binding</keyword>
<keyword id="KW-0699">rRNA-binding</keyword>
<dbReference type="EMBL" id="CP000038">
    <property type="protein sequence ID" value="AAZ90868.1"/>
    <property type="molecule type" value="Genomic_DNA"/>
</dbReference>
<dbReference type="RefSeq" id="WP_001196062.1">
    <property type="nucleotide sequence ID" value="NC_007384.1"/>
</dbReference>
<dbReference type="SMR" id="Q3YUE4"/>
<dbReference type="GeneID" id="93777620"/>
<dbReference type="KEGG" id="ssn:SSON_4386"/>
<dbReference type="HOGENOM" id="CLU_078938_4_1_6"/>
<dbReference type="Proteomes" id="UP000002529">
    <property type="component" value="Chromosome"/>
</dbReference>
<dbReference type="GO" id="GO:1990904">
    <property type="term" value="C:ribonucleoprotein complex"/>
    <property type="evidence" value="ECO:0007669"/>
    <property type="project" value="UniProtKB-KW"/>
</dbReference>
<dbReference type="GO" id="GO:0005840">
    <property type="term" value="C:ribosome"/>
    <property type="evidence" value="ECO:0007669"/>
    <property type="project" value="UniProtKB-KW"/>
</dbReference>
<dbReference type="GO" id="GO:0019843">
    <property type="term" value="F:rRNA binding"/>
    <property type="evidence" value="ECO:0007669"/>
    <property type="project" value="UniProtKB-UniRule"/>
</dbReference>
<dbReference type="GO" id="GO:0003735">
    <property type="term" value="F:structural constituent of ribosome"/>
    <property type="evidence" value="ECO:0007669"/>
    <property type="project" value="InterPro"/>
</dbReference>
<dbReference type="GO" id="GO:0006412">
    <property type="term" value="P:translation"/>
    <property type="evidence" value="ECO:0007669"/>
    <property type="project" value="UniProtKB-UniRule"/>
</dbReference>
<dbReference type="FunFam" id="3.10.430.100:FF:000001">
    <property type="entry name" value="50S ribosomal protein L9"/>
    <property type="match status" value="1"/>
</dbReference>
<dbReference type="FunFam" id="3.40.5.10:FF:000001">
    <property type="entry name" value="50S ribosomal protein L9"/>
    <property type="match status" value="1"/>
</dbReference>
<dbReference type="Gene3D" id="3.10.430.100">
    <property type="entry name" value="Ribosomal protein L9, C-terminal domain"/>
    <property type="match status" value="1"/>
</dbReference>
<dbReference type="Gene3D" id="3.40.5.10">
    <property type="entry name" value="Ribosomal protein L9, N-terminal domain"/>
    <property type="match status" value="1"/>
</dbReference>
<dbReference type="HAMAP" id="MF_00503">
    <property type="entry name" value="Ribosomal_bL9"/>
    <property type="match status" value="1"/>
</dbReference>
<dbReference type="InterPro" id="IPR000244">
    <property type="entry name" value="Ribosomal_bL9"/>
</dbReference>
<dbReference type="InterPro" id="IPR009027">
    <property type="entry name" value="Ribosomal_bL9/RNase_H1_N"/>
</dbReference>
<dbReference type="InterPro" id="IPR020594">
    <property type="entry name" value="Ribosomal_bL9_bac/chp"/>
</dbReference>
<dbReference type="InterPro" id="IPR020069">
    <property type="entry name" value="Ribosomal_bL9_C"/>
</dbReference>
<dbReference type="InterPro" id="IPR036791">
    <property type="entry name" value="Ribosomal_bL9_C_sf"/>
</dbReference>
<dbReference type="InterPro" id="IPR020070">
    <property type="entry name" value="Ribosomal_bL9_N"/>
</dbReference>
<dbReference type="InterPro" id="IPR036935">
    <property type="entry name" value="Ribosomal_bL9_N_sf"/>
</dbReference>
<dbReference type="NCBIfam" id="TIGR00158">
    <property type="entry name" value="L9"/>
    <property type="match status" value="1"/>
</dbReference>
<dbReference type="PANTHER" id="PTHR21368">
    <property type="entry name" value="50S RIBOSOMAL PROTEIN L9"/>
    <property type="match status" value="1"/>
</dbReference>
<dbReference type="Pfam" id="PF03948">
    <property type="entry name" value="Ribosomal_L9_C"/>
    <property type="match status" value="1"/>
</dbReference>
<dbReference type="Pfam" id="PF01281">
    <property type="entry name" value="Ribosomal_L9_N"/>
    <property type="match status" value="1"/>
</dbReference>
<dbReference type="SUPFAM" id="SSF55658">
    <property type="entry name" value="L9 N-domain-like"/>
    <property type="match status" value="1"/>
</dbReference>
<dbReference type="SUPFAM" id="SSF55653">
    <property type="entry name" value="Ribosomal protein L9 C-domain"/>
    <property type="match status" value="1"/>
</dbReference>
<dbReference type="PROSITE" id="PS00651">
    <property type="entry name" value="RIBOSOMAL_L9"/>
    <property type="match status" value="1"/>
</dbReference>
<proteinExistence type="inferred from homology"/>
<feature type="chain" id="PRO_0000236587" description="Large ribosomal subunit protein bL9">
    <location>
        <begin position="1"/>
        <end position="149"/>
    </location>
</feature>
<feature type="modified residue" description="N6-acetyllysine" evidence="1">
    <location>
        <position position="89"/>
    </location>
</feature>
<gene>
    <name evidence="1" type="primary">rplI</name>
    <name type="ordered locus">SSON_4386</name>
</gene>
<accession>Q3YUE4</accession>
<sequence length="149" mass="15769">MQVILLDKVANLGSLGDQVNVKAGYARNFLVPQGKAVPATKKNIEFFEARRAELEAKLAEVLAAANARAEKINALETVTIASKAGDEGKLFGSIGTRDIADAVTAAGVEVAKSEVRLPNGVLRTTGEHEVSFQVHSEVFAKVIVNVVAE</sequence>